<accession>Q21MK4</accession>
<protein>
    <recommendedName>
        <fullName evidence="1">3-dehydroquinate dehydratase</fullName>
        <shortName evidence="1">3-dehydroquinase</shortName>
        <ecNumber evidence="1">4.2.1.10</ecNumber>
    </recommendedName>
    <alternativeName>
        <fullName evidence="1">Type II DHQase</fullName>
    </alternativeName>
</protein>
<proteinExistence type="inferred from homology"/>
<comment type="function">
    <text evidence="1">Catalyzes a trans-dehydration via an enolate intermediate.</text>
</comment>
<comment type="catalytic activity">
    <reaction evidence="1">
        <text>3-dehydroquinate = 3-dehydroshikimate + H2O</text>
        <dbReference type="Rhea" id="RHEA:21096"/>
        <dbReference type="ChEBI" id="CHEBI:15377"/>
        <dbReference type="ChEBI" id="CHEBI:16630"/>
        <dbReference type="ChEBI" id="CHEBI:32364"/>
        <dbReference type="EC" id="4.2.1.10"/>
    </reaction>
</comment>
<comment type="pathway">
    <text evidence="1">Metabolic intermediate biosynthesis; chorismate biosynthesis; chorismate from D-erythrose 4-phosphate and phosphoenolpyruvate: step 3/7.</text>
</comment>
<comment type="subunit">
    <text evidence="1">Homododecamer.</text>
</comment>
<comment type="similarity">
    <text evidence="1">Belongs to the type-II 3-dehydroquinase family.</text>
</comment>
<keyword id="KW-0028">Amino-acid biosynthesis</keyword>
<keyword id="KW-0057">Aromatic amino acid biosynthesis</keyword>
<keyword id="KW-0456">Lyase</keyword>
<keyword id="KW-1185">Reference proteome</keyword>
<feature type="chain" id="PRO_1000023509" description="3-dehydroquinate dehydratase">
    <location>
        <begin position="1"/>
        <end position="146"/>
    </location>
</feature>
<feature type="active site" description="Proton acceptor" evidence="1">
    <location>
        <position position="23"/>
    </location>
</feature>
<feature type="active site" description="Proton donor" evidence="1">
    <location>
        <position position="101"/>
    </location>
</feature>
<feature type="binding site" evidence="1">
    <location>
        <position position="75"/>
    </location>
    <ligand>
        <name>substrate</name>
    </ligand>
</feature>
<feature type="binding site" evidence="1">
    <location>
        <position position="81"/>
    </location>
    <ligand>
        <name>substrate</name>
    </ligand>
</feature>
<feature type="binding site" evidence="1">
    <location>
        <position position="88"/>
    </location>
    <ligand>
        <name>substrate</name>
    </ligand>
</feature>
<feature type="binding site" evidence="1">
    <location>
        <begin position="102"/>
        <end position="103"/>
    </location>
    <ligand>
        <name>substrate</name>
    </ligand>
</feature>
<feature type="binding site" evidence="1">
    <location>
        <position position="112"/>
    </location>
    <ligand>
        <name>substrate</name>
    </ligand>
</feature>
<feature type="site" description="Transition state stabilizer" evidence="1">
    <location>
        <position position="18"/>
    </location>
</feature>
<organism>
    <name type="scientific">Saccharophagus degradans (strain 2-40 / ATCC 43961 / DSM 17024)</name>
    <dbReference type="NCBI Taxonomy" id="203122"/>
    <lineage>
        <taxon>Bacteria</taxon>
        <taxon>Pseudomonadati</taxon>
        <taxon>Pseudomonadota</taxon>
        <taxon>Gammaproteobacteria</taxon>
        <taxon>Cellvibrionales</taxon>
        <taxon>Cellvibrionaceae</taxon>
        <taxon>Saccharophagus</taxon>
    </lineage>
</organism>
<name>AROQ_SACD2</name>
<evidence type="ECO:0000255" key="1">
    <source>
        <dbReference type="HAMAP-Rule" id="MF_00169"/>
    </source>
</evidence>
<reference key="1">
    <citation type="journal article" date="2008" name="PLoS Genet.">
        <title>Complete genome sequence of the complex carbohydrate-degrading marine bacterium, Saccharophagus degradans strain 2-40 T.</title>
        <authorList>
            <person name="Weiner R.M."/>
            <person name="Taylor L.E. II"/>
            <person name="Henrissat B."/>
            <person name="Hauser L."/>
            <person name="Land M."/>
            <person name="Coutinho P.M."/>
            <person name="Rancurel C."/>
            <person name="Saunders E.H."/>
            <person name="Longmire A.G."/>
            <person name="Zhang H."/>
            <person name="Bayer E.A."/>
            <person name="Gilbert H.J."/>
            <person name="Larimer F."/>
            <person name="Zhulin I.B."/>
            <person name="Ekborg N.A."/>
            <person name="Lamed R."/>
            <person name="Richardson P.M."/>
            <person name="Borovok I."/>
            <person name="Hutcheson S."/>
        </authorList>
    </citation>
    <scope>NUCLEOTIDE SEQUENCE [LARGE SCALE GENOMIC DNA]</scope>
    <source>
        <strain>2-40 / ATCC 43961 / DSM 17024</strain>
    </source>
</reference>
<gene>
    <name evidence="1" type="primary">aroQ</name>
    <name type="ordered locus">Sde_0813</name>
</gene>
<dbReference type="EC" id="4.2.1.10" evidence="1"/>
<dbReference type="EMBL" id="CP000282">
    <property type="protein sequence ID" value="ABD80075.1"/>
    <property type="molecule type" value="Genomic_DNA"/>
</dbReference>
<dbReference type="RefSeq" id="WP_011467296.1">
    <property type="nucleotide sequence ID" value="NC_007912.1"/>
</dbReference>
<dbReference type="SMR" id="Q21MK4"/>
<dbReference type="STRING" id="203122.Sde_0813"/>
<dbReference type="GeneID" id="98612496"/>
<dbReference type="KEGG" id="sde:Sde_0813"/>
<dbReference type="eggNOG" id="COG0757">
    <property type="taxonomic scope" value="Bacteria"/>
</dbReference>
<dbReference type="HOGENOM" id="CLU_090968_1_0_6"/>
<dbReference type="OrthoDB" id="9790793at2"/>
<dbReference type="UniPathway" id="UPA00053">
    <property type="reaction ID" value="UER00086"/>
</dbReference>
<dbReference type="Proteomes" id="UP000001947">
    <property type="component" value="Chromosome"/>
</dbReference>
<dbReference type="GO" id="GO:0003855">
    <property type="term" value="F:3-dehydroquinate dehydratase activity"/>
    <property type="evidence" value="ECO:0007669"/>
    <property type="project" value="UniProtKB-UniRule"/>
</dbReference>
<dbReference type="GO" id="GO:0008652">
    <property type="term" value="P:amino acid biosynthetic process"/>
    <property type="evidence" value="ECO:0007669"/>
    <property type="project" value="UniProtKB-KW"/>
</dbReference>
<dbReference type="GO" id="GO:0009073">
    <property type="term" value="P:aromatic amino acid family biosynthetic process"/>
    <property type="evidence" value="ECO:0007669"/>
    <property type="project" value="UniProtKB-KW"/>
</dbReference>
<dbReference type="GO" id="GO:0009423">
    <property type="term" value="P:chorismate biosynthetic process"/>
    <property type="evidence" value="ECO:0007669"/>
    <property type="project" value="UniProtKB-UniRule"/>
</dbReference>
<dbReference type="GO" id="GO:0019631">
    <property type="term" value="P:quinate catabolic process"/>
    <property type="evidence" value="ECO:0007669"/>
    <property type="project" value="TreeGrafter"/>
</dbReference>
<dbReference type="CDD" id="cd00466">
    <property type="entry name" value="DHQase_II"/>
    <property type="match status" value="1"/>
</dbReference>
<dbReference type="Gene3D" id="3.40.50.9100">
    <property type="entry name" value="Dehydroquinase, class II"/>
    <property type="match status" value="1"/>
</dbReference>
<dbReference type="HAMAP" id="MF_00169">
    <property type="entry name" value="AroQ"/>
    <property type="match status" value="1"/>
</dbReference>
<dbReference type="InterPro" id="IPR001874">
    <property type="entry name" value="DHquinase_II"/>
</dbReference>
<dbReference type="InterPro" id="IPR018509">
    <property type="entry name" value="DHquinase_II_CS"/>
</dbReference>
<dbReference type="InterPro" id="IPR036441">
    <property type="entry name" value="DHquinase_II_sf"/>
</dbReference>
<dbReference type="NCBIfam" id="TIGR01088">
    <property type="entry name" value="aroQ"/>
    <property type="match status" value="1"/>
</dbReference>
<dbReference type="NCBIfam" id="NF003804">
    <property type="entry name" value="PRK05395.1-1"/>
    <property type="match status" value="1"/>
</dbReference>
<dbReference type="NCBIfam" id="NF003805">
    <property type="entry name" value="PRK05395.1-2"/>
    <property type="match status" value="1"/>
</dbReference>
<dbReference type="NCBIfam" id="NF003806">
    <property type="entry name" value="PRK05395.1-3"/>
    <property type="match status" value="1"/>
</dbReference>
<dbReference type="NCBIfam" id="NF003807">
    <property type="entry name" value="PRK05395.1-4"/>
    <property type="match status" value="1"/>
</dbReference>
<dbReference type="PANTHER" id="PTHR21272">
    <property type="entry name" value="CATABOLIC 3-DEHYDROQUINASE"/>
    <property type="match status" value="1"/>
</dbReference>
<dbReference type="PANTHER" id="PTHR21272:SF3">
    <property type="entry name" value="CATABOLIC 3-DEHYDROQUINASE"/>
    <property type="match status" value="1"/>
</dbReference>
<dbReference type="Pfam" id="PF01220">
    <property type="entry name" value="DHquinase_II"/>
    <property type="match status" value="1"/>
</dbReference>
<dbReference type="PIRSF" id="PIRSF001399">
    <property type="entry name" value="DHquinase_II"/>
    <property type="match status" value="1"/>
</dbReference>
<dbReference type="SUPFAM" id="SSF52304">
    <property type="entry name" value="Type II 3-dehydroquinate dehydratase"/>
    <property type="match status" value="1"/>
</dbReference>
<dbReference type="PROSITE" id="PS01029">
    <property type="entry name" value="DEHYDROQUINASE_II"/>
    <property type="match status" value="1"/>
</dbReference>
<sequence length="146" mass="15899">MATILVLHGPNLNLLGTREPEIYGATTLADINSTLTEMCIAKGHHLQALQSNAEYELINRIHDAKGEGINFIIINPAAFTHTSVALRDALAAVDIPFIECHLSNVHTREAFRHHSYFSDLAQGVICGFGAQSYELALQAAFAKLDS</sequence>